<feature type="peptide" id="PRO_0000430022" description="M-poneritoxin-Dq4b/U1-poneritoxin-Dq4c/U1-poneritoxin-Dq4d" evidence="1">
    <location>
        <begin position="1"/>
        <end position="28"/>
    </location>
</feature>
<feature type="modified residue" description="Methionine sulfoxide; in form U1-PONTX-Dq4d" evidence="1">
    <location>
        <position position="20"/>
    </location>
</feature>
<feature type="modified residue" description="Alanine amide; in form Dq-1362 and U1-PONTX-Dq4d" evidence="1">
    <location>
        <position position="28"/>
    </location>
</feature>
<feature type="unsure residue" description="L or I" evidence="1">
    <location>
        <position position="2"/>
    </location>
</feature>
<feature type="unsure residue" description="I or L" evidence="1">
    <location>
        <position position="13"/>
    </location>
</feature>
<feature type="unsure residue" description="L or I" evidence="1">
    <location>
        <position position="25"/>
    </location>
</feature>
<protein>
    <recommendedName>
        <fullName evidence="3">M-poneritoxin-Dq4b/U1-poneritoxin-Dq4c/U1-poneritoxin-Dq4d</fullName>
        <shortName evidence="3">M-PONTX-Dq4b/U1-PONTX-Dq4c/U1-PONTX-Dq4d</shortName>
    </recommendedName>
    <alternativeName>
        <fullName evidence="2">Dinoponeratoxin Dq-3162/Dq-3163/Dq-3178</fullName>
    </alternativeName>
    <alternativeName>
        <fullName evidence="4">Poneratoxin</fullName>
    </alternativeName>
</protein>
<organism>
    <name type="scientific">Dinoponera quadriceps</name>
    <name type="common">South American ant</name>
    <dbReference type="NCBI Taxonomy" id="609295"/>
    <lineage>
        <taxon>Eukaryota</taxon>
        <taxon>Metazoa</taxon>
        <taxon>Ecdysozoa</taxon>
        <taxon>Arthropoda</taxon>
        <taxon>Hexapoda</taxon>
        <taxon>Insecta</taxon>
        <taxon>Pterygota</taxon>
        <taxon>Neoptera</taxon>
        <taxon>Endopterygota</taxon>
        <taxon>Hymenoptera</taxon>
        <taxon>Apocrita</taxon>
        <taxon>Aculeata</taxon>
        <taxon>Formicoidea</taxon>
        <taxon>Formicidae</taxon>
        <taxon>Ponerinae</taxon>
        <taxon>Ponerini</taxon>
        <taxon>Dinoponera</taxon>
    </lineage>
</organism>
<dbReference type="Proteomes" id="UP000515204">
    <property type="component" value="Unplaced"/>
</dbReference>
<dbReference type="GO" id="GO:0005576">
    <property type="term" value="C:extracellular region"/>
    <property type="evidence" value="ECO:0007669"/>
    <property type="project" value="UniProtKB-SubCell"/>
</dbReference>
<dbReference type="GO" id="GO:0042742">
    <property type="term" value="P:defense response to bacterium"/>
    <property type="evidence" value="ECO:0007669"/>
    <property type="project" value="UniProtKB-KW"/>
</dbReference>
<dbReference type="GO" id="GO:0050832">
    <property type="term" value="P:defense response to fungus"/>
    <property type="evidence" value="ECO:0007669"/>
    <property type="project" value="UniProtKB-KW"/>
</dbReference>
<dbReference type="GO" id="GO:0031640">
    <property type="term" value="P:killing of cells of another organism"/>
    <property type="evidence" value="ECO:0007669"/>
    <property type="project" value="UniProtKB-KW"/>
</dbReference>
<accession>C0HJH6</accession>
<reference key="1">
    <citation type="journal article" date="2013" name="J. Proteomics">
        <title>Peptidomic comparison and characterization of the major components of the venom of the giant ant Dinoponera quadriceps collected in four different areas of Brazil.</title>
        <authorList>
            <person name="Cologna C.T."/>
            <person name="Cardoso Jdos S."/>
            <person name="Jourdan E."/>
            <person name="Degueldre M."/>
            <person name="Upert G."/>
            <person name="Gilles N."/>
            <person name="Uetanabaro A.P."/>
            <person name="Costa Neto E.M."/>
            <person name="Thonart P."/>
            <person name="de Pauw E."/>
            <person name="Quinton L."/>
        </authorList>
    </citation>
    <scope>PROTEIN SEQUENCE</scope>
    <scope>FUNCTION</scope>
    <scope>SUBCELLULAR LOCATION</scope>
    <scope>MASS SPECTROMETRY</scope>
    <scope>SYNTHESIS</scope>
    <scope>OXIDATION AT MET-20</scope>
    <scope>AMIDATION AT ALA-28</scope>
    <source>
        <tissue>Venom</tissue>
    </source>
</reference>
<reference key="2">
    <citation type="journal article" date="2016" name="Toxins">
        <title>The biochemical toxin arsenal from ant venoms.</title>
        <authorList>
            <person name="Touchard A."/>
            <person name="Aili S.R."/>
            <person name="Fox E.G."/>
            <person name="Escoubas P."/>
            <person name="Orivel J."/>
            <person name="Nicholson G.M."/>
            <person name="Dejean A."/>
        </authorList>
    </citation>
    <scope>REVIEW</scope>
    <scope>NOMENCLATURE</scope>
</reference>
<sequence length="28" mass="3166">GLKDWWNKHKDKIVEVVKEMGKAGLNAA</sequence>
<comment type="function">
    <text evidence="1">M-poneritoxin-Dq4b: this synthetic peptide has antimicrobial activity against Gram-positive bacteria B.amyloliquefacies S499 (MIC=0.1 mM), L.monocytogenes 2231 and S.aureus ATCC 29213, against Gram-negative bacteria P.putida BTP1, P.aeruginosa PaO1 and E.coli ATCC 10536, and against the fungi S.cerevisiae, R.mucilaginosa and C.cucumerinum. Not active against the fungi F.oxysporum and B.cinerea.</text>
</comment>
<comment type="subcellular location">
    <subcellularLocation>
        <location evidence="1">Secreted</location>
    </subcellularLocation>
</comment>
<comment type="tissue specificity">
    <text evidence="5">Expressed by the venom gland.</text>
</comment>
<comment type="PTM">
    <text evidence="1">Occurs in 3 forms, M-PONTX-Dq4b has an amidated Ala-28, U1-PONTX-Dq4d has an amidated Ala-28 and an oxidized Met-20, U1-PONTX-Dq4c has no modifications at either Met-20 or Ala-28.</text>
</comment>
<comment type="mass spectrometry" mass="3162.7" method="Electrospray" evidence="1">
    <text>M-PONTX-Dq4b.</text>
</comment>
<comment type="mass spectrometry" mass="3163.7" method="Electrospray" evidence="1">
    <text>U1-PONTX-Dq4c.</text>
</comment>
<comment type="mass spectrometry" mass="3178.7" method="Electrospray" evidence="1">
    <text>U1-PONTX-Dq4d.</text>
</comment>
<evidence type="ECO:0000269" key="1">
    <source>
    </source>
</evidence>
<evidence type="ECO:0000303" key="2">
    <source>
    </source>
</evidence>
<evidence type="ECO:0000303" key="3">
    <source>
    </source>
</evidence>
<evidence type="ECO:0000305" key="4"/>
<evidence type="ECO:0000305" key="5">
    <source>
    </source>
</evidence>
<proteinExistence type="evidence at protein level"/>
<name>TX4BC_DINQU</name>
<keyword id="KW-0027">Amidation</keyword>
<keyword id="KW-0044">Antibiotic</keyword>
<keyword id="KW-0929">Antimicrobial</keyword>
<keyword id="KW-0903">Direct protein sequencing</keyword>
<keyword id="KW-0295">Fungicide</keyword>
<keyword id="KW-0558">Oxidation</keyword>
<keyword id="KW-1185">Reference proteome</keyword>
<keyword id="KW-0964">Secreted</keyword>